<evidence type="ECO:0000250" key="1">
    <source>
        <dbReference type="UniProtKB" id="Q56VL3"/>
    </source>
</evidence>
<evidence type="ECO:0000269" key="2">
    <source>
    </source>
</evidence>
<evidence type="ECO:0007744" key="3">
    <source>
    </source>
</evidence>
<proteinExistence type="evidence at protein level"/>
<name>OCAD2_MOUSE</name>
<protein>
    <recommendedName>
        <fullName>OCIA domain-containing protein 2</fullName>
    </recommendedName>
</protein>
<feature type="chain" id="PRO_0000299393" description="OCIA domain-containing protein 2">
    <location>
        <begin position="1"/>
        <end position="154"/>
    </location>
</feature>
<feature type="domain" description="OCIA">
    <location>
        <begin position="1"/>
        <end position="120"/>
    </location>
</feature>
<feature type="modified residue" description="N6-acetyllysine" evidence="3">
    <location>
        <position position="41"/>
    </location>
</feature>
<comment type="function">
    <text evidence="1">Has an essential role in the assembly of mitochondrial respiratory chain complex III. Is also required for STAT3 activation and plays a role in cell migration.</text>
</comment>
<comment type="subunit">
    <text evidence="1">Interacts (via OCIA domain) with OCIAD1/ASRIJ and STAT3.</text>
</comment>
<comment type="subcellular location">
    <subcellularLocation>
        <location evidence="1">Endosome</location>
    </subcellularLocation>
    <subcellularLocation>
        <location evidence="1">Mitochondrion</location>
    </subcellularLocation>
    <subcellularLocation>
        <location evidence="1">Mitochondrion inner membrane</location>
    </subcellularLocation>
</comment>
<comment type="tissue specificity">
    <text evidence="2">Abundant in kidney, liver and brain.</text>
</comment>
<sequence length="154" mass="16926">MASVSTHGNQEKSPHLPPLSKQSLLFCPKSKLHIHRGEIAKIIRECQEESFWKRALPFSLISMLVTQGLVHQGYLAANPRFGSLPKVALAGLLGFGLGKASYIRVCQSKFHSFEDQLRGAGFGPEHNRHCLLTCEDCKTRRGLSEKAGSQPSAS</sequence>
<accession>Q9D8W7</accession>
<gene>
    <name type="primary">Ociad2</name>
</gene>
<organism>
    <name type="scientific">Mus musculus</name>
    <name type="common">Mouse</name>
    <dbReference type="NCBI Taxonomy" id="10090"/>
    <lineage>
        <taxon>Eukaryota</taxon>
        <taxon>Metazoa</taxon>
        <taxon>Chordata</taxon>
        <taxon>Craniata</taxon>
        <taxon>Vertebrata</taxon>
        <taxon>Euteleostomi</taxon>
        <taxon>Mammalia</taxon>
        <taxon>Eutheria</taxon>
        <taxon>Euarchontoglires</taxon>
        <taxon>Glires</taxon>
        <taxon>Rodentia</taxon>
        <taxon>Myomorpha</taxon>
        <taxon>Muroidea</taxon>
        <taxon>Muridae</taxon>
        <taxon>Murinae</taxon>
        <taxon>Mus</taxon>
        <taxon>Mus</taxon>
    </lineage>
</organism>
<keyword id="KW-0007">Acetylation</keyword>
<keyword id="KW-0967">Endosome</keyword>
<keyword id="KW-0472">Membrane</keyword>
<keyword id="KW-0496">Mitochondrion</keyword>
<keyword id="KW-0999">Mitochondrion inner membrane</keyword>
<keyword id="KW-1185">Reference proteome</keyword>
<reference key="1">
    <citation type="journal article" date="2005" name="Science">
        <title>The transcriptional landscape of the mammalian genome.</title>
        <authorList>
            <person name="Carninci P."/>
            <person name="Kasukawa T."/>
            <person name="Katayama S."/>
            <person name="Gough J."/>
            <person name="Frith M.C."/>
            <person name="Maeda N."/>
            <person name="Oyama R."/>
            <person name="Ravasi T."/>
            <person name="Lenhard B."/>
            <person name="Wells C."/>
            <person name="Kodzius R."/>
            <person name="Shimokawa K."/>
            <person name="Bajic V.B."/>
            <person name="Brenner S.E."/>
            <person name="Batalov S."/>
            <person name="Forrest A.R."/>
            <person name="Zavolan M."/>
            <person name="Davis M.J."/>
            <person name="Wilming L.G."/>
            <person name="Aidinis V."/>
            <person name="Allen J.E."/>
            <person name="Ambesi-Impiombato A."/>
            <person name="Apweiler R."/>
            <person name="Aturaliya R.N."/>
            <person name="Bailey T.L."/>
            <person name="Bansal M."/>
            <person name="Baxter L."/>
            <person name="Beisel K.W."/>
            <person name="Bersano T."/>
            <person name="Bono H."/>
            <person name="Chalk A.M."/>
            <person name="Chiu K.P."/>
            <person name="Choudhary V."/>
            <person name="Christoffels A."/>
            <person name="Clutterbuck D.R."/>
            <person name="Crowe M.L."/>
            <person name="Dalla E."/>
            <person name="Dalrymple B.P."/>
            <person name="de Bono B."/>
            <person name="Della Gatta G."/>
            <person name="di Bernardo D."/>
            <person name="Down T."/>
            <person name="Engstrom P."/>
            <person name="Fagiolini M."/>
            <person name="Faulkner G."/>
            <person name="Fletcher C.F."/>
            <person name="Fukushima T."/>
            <person name="Furuno M."/>
            <person name="Futaki S."/>
            <person name="Gariboldi M."/>
            <person name="Georgii-Hemming P."/>
            <person name="Gingeras T.R."/>
            <person name="Gojobori T."/>
            <person name="Green R.E."/>
            <person name="Gustincich S."/>
            <person name="Harbers M."/>
            <person name="Hayashi Y."/>
            <person name="Hensch T.K."/>
            <person name="Hirokawa N."/>
            <person name="Hill D."/>
            <person name="Huminiecki L."/>
            <person name="Iacono M."/>
            <person name="Ikeo K."/>
            <person name="Iwama A."/>
            <person name="Ishikawa T."/>
            <person name="Jakt M."/>
            <person name="Kanapin A."/>
            <person name="Katoh M."/>
            <person name="Kawasawa Y."/>
            <person name="Kelso J."/>
            <person name="Kitamura H."/>
            <person name="Kitano H."/>
            <person name="Kollias G."/>
            <person name="Krishnan S.P."/>
            <person name="Kruger A."/>
            <person name="Kummerfeld S.K."/>
            <person name="Kurochkin I.V."/>
            <person name="Lareau L.F."/>
            <person name="Lazarevic D."/>
            <person name="Lipovich L."/>
            <person name="Liu J."/>
            <person name="Liuni S."/>
            <person name="McWilliam S."/>
            <person name="Madan Babu M."/>
            <person name="Madera M."/>
            <person name="Marchionni L."/>
            <person name="Matsuda H."/>
            <person name="Matsuzawa S."/>
            <person name="Miki H."/>
            <person name="Mignone F."/>
            <person name="Miyake S."/>
            <person name="Morris K."/>
            <person name="Mottagui-Tabar S."/>
            <person name="Mulder N."/>
            <person name="Nakano N."/>
            <person name="Nakauchi H."/>
            <person name="Ng P."/>
            <person name="Nilsson R."/>
            <person name="Nishiguchi S."/>
            <person name="Nishikawa S."/>
            <person name="Nori F."/>
            <person name="Ohara O."/>
            <person name="Okazaki Y."/>
            <person name="Orlando V."/>
            <person name="Pang K.C."/>
            <person name="Pavan W.J."/>
            <person name="Pavesi G."/>
            <person name="Pesole G."/>
            <person name="Petrovsky N."/>
            <person name="Piazza S."/>
            <person name="Reed J."/>
            <person name="Reid J.F."/>
            <person name="Ring B.Z."/>
            <person name="Ringwald M."/>
            <person name="Rost B."/>
            <person name="Ruan Y."/>
            <person name="Salzberg S.L."/>
            <person name="Sandelin A."/>
            <person name="Schneider C."/>
            <person name="Schoenbach C."/>
            <person name="Sekiguchi K."/>
            <person name="Semple C.A."/>
            <person name="Seno S."/>
            <person name="Sessa L."/>
            <person name="Sheng Y."/>
            <person name="Shibata Y."/>
            <person name="Shimada H."/>
            <person name="Shimada K."/>
            <person name="Silva D."/>
            <person name="Sinclair B."/>
            <person name="Sperling S."/>
            <person name="Stupka E."/>
            <person name="Sugiura K."/>
            <person name="Sultana R."/>
            <person name="Takenaka Y."/>
            <person name="Taki K."/>
            <person name="Tammoja K."/>
            <person name="Tan S.L."/>
            <person name="Tang S."/>
            <person name="Taylor M.S."/>
            <person name="Tegner J."/>
            <person name="Teichmann S.A."/>
            <person name="Ueda H.R."/>
            <person name="van Nimwegen E."/>
            <person name="Verardo R."/>
            <person name="Wei C.L."/>
            <person name="Yagi K."/>
            <person name="Yamanishi H."/>
            <person name="Zabarovsky E."/>
            <person name="Zhu S."/>
            <person name="Zimmer A."/>
            <person name="Hide W."/>
            <person name="Bult C."/>
            <person name="Grimmond S.M."/>
            <person name="Teasdale R.D."/>
            <person name="Liu E.T."/>
            <person name="Brusic V."/>
            <person name="Quackenbush J."/>
            <person name="Wahlestedt C."/>
            <person name="Mattick J.S."/>
            <person name="Hume D.A."/>
            <person name="Kai C."/>
            <person name="Sasaki D."/>
            <person name="Tomaru Y."/>
            <person name="Fukuda S."/>
            <person name="Kanamori-Katayama M."/>
            <person name="Suzuki M."/>
            <person name="Aoki J."/>
            <person name="Arakawa T."/>
            <person name="Iida J."/>
            <person name="Imamura K."/>
            <person name="Itoh M."/>
            <person name="Kato T."/>
            <person name="Kawaji H."/>
            <person name="Kawagashira N."/>
            <person name="Kawashima T."/>
            <person name="Kojima M."/>
            <person name="Kondo S."/>
            <person name="Konno H."/>
            <person name="Nakano K."/>
            <person name="Ninomiya N."/>
            <person name="Nishio T."/>
            <person name="Okada M."/>
            <person name="Plessy C."/>
            <person name="Shibata K."/>
            <person name="Shiraki T."/>
            <person name="Suzuki S."/>
            <person name="Tagami M."/>
            <person name="Waki K."/>
            <person name="Watahiki A."/>
            <person name="Okamura-Oho Y."/>
            <person name="Suzuki H."/>
            <person name="Kawai J."/>
            <person name="Hayashizaki Y."/>
        </authorList>
    </citation>
    <scope>NUCLEOTIDE SEQUENCE [LARGE SCALE MRNA]</scope>
    <source>
        <strain>C57BL/6J</strain>
        <tissue>Pancreas</tissue>
    </source>
</reference>
<reference key="2">
    <citation type="journal article" date="2004" name="Genome Res.">
        <title>The status, quality, and expansion of the NIH full-length cDNA project: the Mammalian Gene Collection (MGC).</title>
        <authorList>
            <consortium name="The MGC Project Team"/>
        </authorList>
    </citation>
    <scope>NUCLEOTIDE SEQUENCE [LARGE SCALE MRNA]</scope>
    <source>
        <strain>FVB/N</strain>
        <tissue>Kidney</tissue>
    </source>
</reference>
<reference key="3">
    <citation type="journal article" date="2010" name="Cell">
        <title>A tissue-specific atlas of mouse protein phosphorylation and expression.</title>
        <authorList>
            <person name="Huttlin E.L."/>
            <person name="Jedrychowski M.P."/>
            <person name="Elias J.E."/>
            <person name="Goswami T."/>
            <person name="Rad R."/>
            <person name="Beausoleil S.A."/>
            <person name="Villen J."/>
            <person name="Haas W."/>
            <person name="Sowa M.E."/>
            <person name="Gygi S.P."/>
        </authorList>
    </citation>
    <scope>IDENTIFICATION BY MASS SPECTROMETRY [LARGE SCALE ANALYSIS]</scope>
    <source>
        <tissue>Brain</tissue>
        <tissue>Brown adipose tissue</tissue>
        <tissue>Heart</tissue>
        <tissue>Kidney</tissue>
        <tissue>Liver</tissue>
        <tissue>Lung</tissue>
        <tissue>Pancreas</tissue>
    </source>
</reference>
<reference key="4">
    <citation type="journal article" date="2013" name="Proc. Natl. Acad. Sci. U.S.A.">
        <title>Label-free quantitative proteomics of the lysine acetylome in mitochondria identifies substrates of SIRT3 in metabolic pathways.</title>
        <authorList>
            <person name="Rardin M.J."/>
            <person name="Newman J.C."/>
            <person name="Held J.M."/>
            <person name="Cusack M.P."/>
            <person name="Sorensen D.J."/>
            <person name="Li B."/>
            <person name="Schilling B."/>
            <person name="Mooney S.D."/>
            <person name="Kahn C.R."/>
            <person name="Verdin E."/>
            <person name="Gibson B.W."/>
        </authorList>
    </citation>
    <scope>ACETYLATION [LARGE SCALE ANALYSIS] AT LYS-41</scope>
    <scope>IDENTIFICATION BY MASS SPECTROMETRY [LARGE SCALE ANALYSIS]</scope>
    <source>
        <tissue>Liver</tissue>
    </source>
</reference>
<reference key="5">
    <citation type="journal article" date="2018" name="Sci. Rep.">
        <title>A double helical motif in OCIAD2 is essential for its localization, interactions and STAT3 activation.</title>
        <authorList>
            <person name="Sinha S."/>
            <person name="Bheemsetty V.A."/>
            <person name="Inamdar M.S."/>
        </authorList>
    </citation>
    <scope>TISSUE SPECIFICITY</scope>
</reference>
<dbReference type="EMBL" id="AK007617">
    <property type="protein sequence ID" value="BAB25138.1"/>
    <property type="molecule type" value="mRNA"/>
</dbReference>
<dbReference type="EMBL" id="BC044883">
    <property type="protein sequence ID" value="AAH44883.1"/>
    <property type="molecule type" value="mRNA"/>
</dbReference>
<dbReference type="CCDS" id="CCDS19340.1"/>
<dbReference type="RefSeq" id="NP_081226.1">
    <property type="nucleotide sequence ID" value="NM_026950.4"/>
</dbReference>
<dbReference type="FunCoup" id="Q9D8W7">
    <property type="interactions" value="390"/>
</dbReference>
<dbReference type="STRING" id="10090.ENSMUSP00000084445"/>
<dbReference type="iPTMnet" id="Q9D8W7"/>
<dbReference type="PhosphoSitePlus" id="Q9D8W7"/>
<dbReference type="SwissPalm" id="Q9D8W7"/>
<dbReference type="jPOST" id="Q9D8W7"/>
<dbReference type="PaxDb" id="10090-ENSMUSP00000084445"/>
<dbReference type="PeptideAtlas" id="Q9D8W7"/>
<dbReference type="ProteomicsDB" id="294067"/>
<dbReference type="Pumba" id="Q9D8W7"/>
<dbReference type="Antibodypedia" id="23867">
    <property type="antibodies" value="163 antibodies from 27 providers"/>
</dbReference>
<dbReference type="DNASU" id="433904"/>
<dbReference type="Ensembl" id="ENSMUST00000087195.9">
    <property type="protein sequence ID" value="ENSMUSP00000084445.6"/>
    <property type="gene ID" value="ENSMUSG00000029153.12"/>
</dbReference>
<dbReference type="GeneID" id="433904"/>
<dbReference type="KEGG" id="mmu:433904"/>
<dbReference type="UCSC" id="uc008xsw.1">
    <property type="organism name" value="mouse"/>
</dbReference>
<dbReference type="AGR" id="MGI:1916377"/>
<dbReference type="CTD" id="132299"/>
<dbReference type="MGI" id="MGI:1916377">
    <property type="gene designation" value="Ociad2"/>
</dbReference>
<dbReference type="VEuPathDB" id="HostDB:ENSMUSG00000029153"/>
<dbReference type="eggNOG" id="ENOG502S4DE">
    <property type="taxonomic scope" value="Eukaryota"/>
</dbReference>
<dbReference type="GeneTree" id="ENSGT00530000063690"/>
<dbReference type="HOGENOM" id="CLU_109198_0_0_1"/>
<dbReference type="InParanoid" id="Q9D8W7"/>
<dbReference type="OMA" id="GIGPWSK"/>
<dbReference type="OrthoDB" id="10003372at2759"/>
<dbReference type="PhylomeDB" id="Q9D8W7"/>
<dbReference type="TreeFam" id="TF327106"/>
<dbReference type="BioGRID-ORCS" id="433904">
    <property type="hits" value="3 hits in 78 CRISPR screens"/>
</dbReference>
<dbReference type="CD-CODE" id="CE726F99">
    <property type="entry name" value="Postsynaptic density"/>
</dbReference>
<dbReference type="ChiTaRS" id="Ociad2">
    <property type="organism name" value="mouse"/>
</dbReference>
<dbReference type="PRO" id="PR:Q9D8W7"/>
<dbReference type="Proteomes" id="UP000000589">
    <property type="component" value="Chromosome 5"/>
</dbReference>
<dbReference type="RNAct" id="Q9D8W7">
    <property type="molecule type" value="protein"/>
</dbReference>
<dbReference type="Bgee" id="ENSMUSG00000029153">
    <property type="expression patterns" value="Expressed in ciliary body and 219 other cell types or tissues"/>
</dbReference>
<dbReference type="ExpressionAtlas" id="Q9D8W7">
    <property type="expression patterns" value="baseline and differential"/>
</dbReference>
<dbReference type="GO" id="GO:0005768">
    <property type="term" value="C:endosome"/>
    <property type="evidence" value="ECO:0007669"/>
    <property type="project" value="UniProtKB-SubCell"/>
</dbReference>
<dbReference type="GO" id="GO:0005743">
    <property type="term" value="C:mitochondrial inner membrane"/>
    <property type="evidence" value="ECO:0007005"/>
    <property type="project" value="MGI"/>
</dbReference>
<dbReference type="GO" id="GO:0005739">
    <property type="term" value="C:mitochondrion"/>
    <property type="evidence" value="ECO:0007005"/>
    <property type="project" value="MGI"/>
</dbReference>
<dbReference type="GO" id="GO:0009617">
    <property type="term" value="P:response to bacterium"/>
    <property type="evidence" value="ECO:0000270"/>
    <property type="project" value="MGI"/>
</dbReference>
<dbReference type="InterPro" id="IPR040187">
    <property type="entry name" value="OCAD1/2"/>
</dbReference>
<dbReference type="InterPro" id="IPR009764">
    <property type="entry name" value="OCIA_dom"/>
</dbReference>
<dbReference type="PANTHER" id="PTHR13336:SF2">
    <property type="entry name" value="OCIA DOMAIN-CONTAINING PROTEIN 2"/>
    <property type="match status" value="1"/>
</dbReference>
<dbReference type="PANTHER" id="PTHR13336">
    <property type="entry name" value="OVARIAN CARCINOMA IMMUNOREACTIVE ANTIGEN"/>
    <property type="match status" value="1"/>
</dbReference>
<dbReference type="Pfam" id="PF07051">
    <property type="entry name" value="OCIA"/>
    <property type="match status" value="1"/>
</dbReference>